<reference key="1">
    <citation type="journal article" date="2004" name="Nat. Biotechnol.">
        <title>Complete genome sequence of the metabolically versatile photosynthetic bacterium Rhodopseudomonas palustris.</title>
        <authorList>
            <person name="Larimer F.W."/>
            <person name="Chain P."/>
            <person name="Hauser L."/>
            <person name="Lamerdin J.E."/>
            <person name="Malfatti S."/>
            <person name="Do L."/>
            <person name="Land M.L."/>
            <person name="Pelletier D.A."/>
            <person name="Beatty J.T."/>
            <person name="Lang A.S."/>
            <person name="Tabita F.R."/>
            <person name="Gibson J.L."/>
            <person name="Hanson T.E."/>
            <person name="Bobst C."/>
            <person name="Torres y Torres J.L."/>
            <person name="Peres C."/>
            <person name="Harrison F.H."/>
            <person name="Gibson J."/>
            <person name="Harwood C.S."/>
        </authorList>
    </citation>
    <scope>NUCLEOTIDE SEQUENCE [LARGE SCALE GENOMIC DNA]</scope>
    <source>
        <strain>ATCC BAA-98 / CGA009</strain>
    </source>
</reference>
<reference key="2">
    <citation type="journal article" date="2004" name="J. Proteome Res.">
        <title>Characterization of the 70S ribosome from Rhodopseudomonas palustris using an integrated 'top-down' and 'bottom-up' mass spectrometric approach.</title>
        <authorList>
            <person name="Strader M.B."/>
            <person name="VerBerkmoes N.C."/>
            <person name="Tabb D.L."/>
            <person name="Connelly H.M."/>
            <person name="Barton J.W."/>
            <person name="Bruce B.D."/>
            <person name="Pelletier D.A."/>
            <person name="Davison B.H."/>
            <person name="Hettich R.L."/>
            <person name="Larimer F.W."/>
            <person name="Hurst G.B."/>
        </authorList>
    </citation>
    <scope>MASS SPECTROMETRY</scope>
    <source>
        <strain>ATCC BAA-98 / CGA009</strain>
    </source>
</reference>
<comment type="function">
    <text evidence="1">One of the primary rRNA binding proteins, it binds directly to 16S rRNA where it nucleates assembly of the head domain of the 30S subunit. Is located at the subunit interface close to the decoding center, probably blocks exit of the E-site tRNA.</text>
</comment>
<comment type="subunit">
    <text evidence="1">Part of the 30S ribosomal subunit. Contacts proteins S9 and S11.</text>
</comment>
<comment type="mass spectrometry" mass="17556.6" method="Electrospray" evidence="2"/>
<comment type="similarity">
    <text evidence="1">Belongs to the universal ribosomal protein uS7 family.</text>
</comment>
<protein>
    <recommendedName>
        <fullName evidence="1">Small ribosomal subunit protein uS7</fullName>
    </recommendedName>
    <alternativeName>
        <fullName evidence="3">30S ribosomal protein S7</fullName>
    </alternativeName>
    <alternativeName>
        <fullName>RRP-S7</fullName>
    </alternativeName>
</protein>
<gene>
    <name evidence="1" type="primary">rpsG</name>
    <name type="ordered locus">RPA3254</name>
</gene>
<proteinExistence type="evidence at protein level"/>
<organism>
    <name type="scientific">Rhodopseudomonas palustris (strain ATCC BAA-98 / CGA009)</name>
    <dbReference type="NCBI Taxonomy" id="258594"/>
    <lineage>
        <taxon>Bacteria</taxon>
        <taxon>Pseudomonadati</taxon>
        <taxon>Pseudomonadota</taxon>
        <taxon>Alphaproteobacteria</taxon>
        <taxon>Hyphomicrobiales</taxon>
        <taxon>Nitrobacteraceae</taxon>
        <taxon>Rhodopseudomonas</taxon>
    </lineage>
</organism>
<feature type="initiator methionine" description="Removed">
    <location>
        <position position="1"/>
    </location>
</feature>
<feature type="chain" id="PRO_0000124330" description="Small ribosomal subunit protein uS7">
    <location>
        <begin position="2"/>
        <end position="156"/>
    </location>
</feature>
<name>RS7_RHOPA</name>
<evidence type="ECO:0000255" key="1">
    <source>
        <dbReference type="HAMAP-Rule" id="MF_00480"/>
    </source>
</evidence>
<evidence type="ECO:0000269" key="2">
    <source>
    </source>
</evidence>
<evidence type="ECO:0000305" key="3"/>
<sequence length="156" mass="17688">MSRRHAAEKREVLPDPKFGNIIVTKFMNSVMYAGKKSVAESIVYGAFDLIEAKTKQPPLGVFEQALDNVMPTIEVRSRRVGGATYQVPVEVRSTRRQALGIRWLITAARGRNEKTMTERLSAELLDASNNRGNAVKKREDVHKMAEANRAFSHYRW</sequence>
<accession>Q6N4T3</accession>
<keyword id="KW-0687">Ribonucleoprotein</keyword>
<keyword id="KW-0689">Ribosomal protein</keyword>
<keyword id="KW-0694">RNA-binding</keyword>
<keyword id="KW-0699">rRNA-binding</keyword>
<keyword id="KW-0820">tRNA-binding</keyword>
<dbReference type="EMBL" id="BX572603">
    <property type="protein sequence ID" value="CAE28695.1"/>
    <property type="molecule type" value="Genomic_DNA"/>
</dbReference>
<dbReference type="RefSeq" id="WP_011158798.1">
    <property type="nucleotide sequence ID" value="NZ_CP116810.1"/>
</dbReference>
<dbReference type="SMR" id="Q6N4T3"/>
<dbReference type="IntAct" id="Q6N4T3">
    <property type="interactions" value="1"/>
</dbReference>
<dbReference type="STRING" id="258594.RPA3254"/>
<dbReference type="GeneID" id="66894340"/>
<dbReference type="eggNOG" id="COG0049">
    <property type="taxonomic scope" value="Bacteria"/>
</dbReference>
<dbReference type="HOGENOM" id="CLU_072226_1_1_5"/>
<dbReference type="PhylomeDB" id="Q6N4T3"/>
<dbReference type="GO" id="GO:0015935">
    <property type="term" value="C:small ribosomal subunit"/>
    <property type="evidence" value="ECO:0007669"/>
    <property type="project" value="InterPro"/>
</dbReference>
<dbReference type="GO" id="GO:0019843">
    <property type="term" value="F:rRNA binding"/>
    <property type="evidence" value="ECO:0007669"/>
    <property type="project" value="UniProtKB-UniRule"/>
</dbReference>
<dbReference type="GO" id="GO:0003735">
    <property type="term" value="F:structural constituent of ribosome"/>
    <property type="evidence" value="ECO:0007669"/>
    <property type="project" value="InterPro"/>
</dbReference>
<dbReference type="GO" id="GO:0000049">
    <property type="term" value="F:tRNA binding"/>
    <property type="evidence" value="ECO:0007669"/>
    <property type="project" value="UniProtKB-UniRule"/>
</dbReference>
<dbReference type="GO" id="GO:0006412">
    <property type="term" value="P:translation"/>
    <property type="evidence" value="ECO:0007669"/>
    <property type="project" value="UniProtKB-UniRule"/>
</dbReference>
<dbReference type="CDD" id="cd14869">
    <property type="entry name" value="uS7_Bacteria"/>
    <property type="match status" value="1"/>
</dbReference>
<dbReference type="FunFam" id="1.10.455.10:FF:000001">
    <property type="entry name" value="30S ribosomal protein S7"/>
    <property type="match status" value="1"/>
</dbReference>
<dbReference type="Gene3D" id="1.10.455.10">
    <property type="entry name" value="Ribosomal protein S7 domain"/>
    <property type="match status" value="1"/>
</dbReference>
<dbReference type="HAMAP" id="MF_00480_B">
    <property type="entry name" value="Ribosomal_uS7_B"/>
    <property type="match status" value="1"/>
</dbReference>
<dbReference type="InterPro" id="IPR000235">
    <property type="entry name" value="Ribosomal_uS7"/>
</dbReference>
<dbReference type="InterPro" id="IPR005717">
    <property type="entry name" value="Ribosomal_uS7_bac/org-type"/>
</dbReference>
<dbReference type="InterPro" id="IPR020606">
    <property type="entry name" value="Ribosomal_uS7_CS"/>
</dbReference>
<dbReference type="InterPro" id="IPR023798">
    <property type="entry name" value="Ribosomal_uS7_dom"/>
</dbReference>
<dbReference type="InterPro" id="IPR036823">
    <property type="entry name" value="Ribosomal_uS7_dom_sf"/>
</dbReference>
<dbReference type="NCBIfam" id="TIGR01029">
    <property type="entry name" value="rpsG_bact"/>
    <property type="match status" value="1"/>
</dbReference>
<dbReference type="PANTHER" id="PTHR11205">
    <property type="entry name" value="RIBOSOMAL PROTEIN S7"/>
    <property type="match status" value="1"/>
</dbReference>
<dbReference type="Pfam" id="PF00177">
    <property type="entry name" value="Ribosomal_S7"/>
    <property type="match status" value="1"/>
</dbReference>
<dbReference type="PIRSF" id="PIRSF002122">
    <property type="entry name" value="RPS7p_RPS7a_RPS5e_RPS7o"/>
    <property type="match status" value="1"/>
</dbReference>
<dbReference type="SUPFAM" id="SSF47973">
    <property type="entry name" value="Ribosomal protein S7"/>
    <property type="match status" value="1"/>
</dbReference>
<dbReference type="PROSITE" id="PS00052">
    <property type="entry name" value="RIBOSOMAL_S7"/>
    <property type="match status" value="1"/>
</dbReference>